<reference key="1">
    <citation type="submission" date="2007-12" db="EMBL/GenBank/DDBJ databases">
        <title>Complete sequence of Methylobacterium extorquens PA1.</title>
        <authorList>
            <consortium name="US DOE Joint Genome Institute"/>
            <person name="Copeland A."/>
            <person name="Lucas S."/>
            <person name="Lapidus A."/>
            <person name="Barry K."/>
            <person name="Glavina del Rio T."/>
            <person name="Dalin E."/>
            <person name="Tice H."/>
            <person name="Pitluck S."/>
            <person name="Saunders E."/>
            <person name="Brettin T."/>
            <person name="Bruce D."/>
            <person name="Detter J.C."/>
            <person name="Han C."/>
            <person name="Schmutz J."/>
            <person name="Larimer F."/>
            <person name="Land M."/>
            <person name="Hauser L."/>
            <person name="Kyrpides N."/>
            <person name="Kim E."/>
            <person name="Marx C."/>
            <person name="Richardson P."/>
        </authorList>
    </citation>
    <scope>NUCLEOTIDE SEQUENCE [LARGE SCALE GENOMIC DNA]</scope>
    <source>
        <strain>PA1</strain>
    </source>
</reference>
<keyword id="KW-0066">ATP synthesis</keyword>
<keyword id="KW-0997">Cell inner membrane</keyword>
<keyword id="KW-1003">Cell membrane</keyword>
<keyword id="KW-0138">CF(0)</keyword>
<keyword id="KW-0375">Hydrogen ion transport</keyword>
<keyword id="KW-0406">Ion transport</keyword>
<keyword id="KW-0472">Membrane</keyword>
<keyword id="KW-0812">Transmembrane</keyword>
<keyword id="KW-1133">Transmembrane helix</keyword>
<keyword id="KW-0813">Transport</keyword>
<gene>
    <name evidence="1" type="primary">atpF1</name>
    <name type="ordered locus">Mext_3172</name>
</gene>
<name>ATPF1_METEP</name>
<sequence>MLLTAEFWVAVAFVAFLVIVWRVGGFSMMTNGLDSRAKRVRNELDEARRLREEAAAVLADYKRRRTEAEREAEAIISGAREDAERIAAEGHARLNDFVARRTKSAEAKIAQAEAQASAQVRAAAADAAVKVSETLLRERLQGAAAQDLLRASLGDVKSRLQA</sequence>
<dbReference type="EMBL" id="CP000908">
    <property type="protein sequence ID" value="ABY31559.1"/>
    <property type="molecule type" value="Genomic_DNA"/>
</dbReference>
<dbReference type="SMR" id="A9VYW7"/>
<dbReference type="KEGG" id="mex:Mext_3172"/>
<dbReference type="eggNOG" id="COG0711">
    <property type="taxonomic scope" value="Bacteria"/>
</dbReference>
<dbReference type="HOGENOM" id="CLU_079215_6_1_5"/>
<dbReference type="BioCyc" id="MEXT419610:MEXT_RS15945-MONOMER"/>
<dbReference type="GO" id="GO:0005886">
    <property type="term" value="C:plasma membrane"/>
    <property type="evidence" value="ECO:0007669"/>
    <property type="project" value="UniProtKB-SubCell"/>
</dbReference>
<dbReference type="GO" id="GO:0045259">
    <property type="term" value="C:proton-transporting ATP synthase complex"/>
    <property type="evidence" value="ECO:0007669"/>
    <property type="project" value="UniProtKB-KW"/>
</dbReference>
<dbReference type="GO" id="GO:0046933">
    <property type="term" value="F:proton-transporting ATP synthase activity, rotational mechanism"/>
    <property type="evidence" value="ECO:0007669"/>
    <property type="project" value="UniProtKB-UniRule"/>
</dbReference>
<dbReference type="GO" id="GO:0046961">
    <property type="term" value="F:proton-transporting ATPase activity, rotational mechanism"/>
    <property type="evidence" value="ECO:0007669"/>
    <property type="project" value="TreeGrafter"/>
</dbReference>
<dbReference type="CDD" id="cd06503">
    <property type="entry name" value="ATP-synt_Fo_b"/>
    <property type="match status" value="1"/>
</dbReference>
<dbReference type="HAMAP" id="MF_01398">
    <property type="entry name" value="ATP_synth_b_bprime"/>
    <property type="match status" value="1"/>
</dbReference>
<dbReference type="InterPro" id="IPR002146">
    <property type="entry name" value="ATP_synth_b/b'su_bac/chlpt"/>
</dbReference>
<dbReference type="InterPro" id="IPR050059">
    <property type="entry name" value="ATP_synthase_B_chain"/>
</dbReference>
<dbReference type="PANTHER" id="PTHR33445:SF1">
    <property type="entry name" value="ATP SYNTHASE SUBUNIT B"/>
    <property type="match status" value="1"/>
</dbReference>
<dbReference type="PANTHER" id="PTHR33445">
    <property type="entry name" value="ATP SYNTHASE SUBUNIT B', CHLOROPLASTIC"/>
    <property type="match status" value="1"/>
</dbReference>
<dbReference type="Pfam" id="PF00430">
    <property type="entry name" value="ATP-synt_B"/>
    <property type="match status" value="1"/>
</dbReference>
<proteinExistence type="inferred from homology"/>
<evidence type="ECO:0000255" key="1">
    <source>
        <dbReference type="HAMAP-Rule" id="MF_01398"/>
    </source>
</evidence>
<feature type="chain" id="PRO_0000368585" description="ATP synthase subunit b 1">
    <location>
        <begin position="1"/>
        <end position="162"/>
    </location>
</feature>
<feature type="transmembrane region" description="Helical" evidence="1">
    <location>
        <begin position="1"/>
        <end position="21"/>
    </location>
</feature>
<organism>
    <name type="scientific">Methylorubrum extorquens (strain PA1)</name>
    <name type="common">Methylobacterium extorquens</name>
    <dbReference type="NCBI Taxonomy" id="419610"/>
    <lineage>
        <taxon>Bacteria</taxon>
        <taxon>Pseudomonadati</taxon>
        <taxon>Pseudomonadota</taxon>
        <taxon>Alphaproteobacteria</taxon>
        <taxon>Hyphomicrobiales</taxon>
        <taxon>Methylobacteriaceae</taxon>
        <taxon>Methylorubrum</taxon>
    </lineage>
</organism>
<comment type="function">
    <text evidence="1">F(1)F(0) ATP synthase produces ATP from ADP in the presence of a proton or sodium gradient. F-type ATPases consist of two structural domains, F(1) containing the extramembraneous catalytic core and F(0) containing the membrane proton channel, linked together by a central stalk and a peripheral stalk. During catalysis, ATP synthesis in the catalytic domain of F(1) is coupled via a rotary mechanism of the central stalk subunits to proton translocation.</text>
</comment>
<comment type="function">
    <text evidence="1">Component of the F(0) channel, it forms part of the peripheral stalk, linking F(1) to F(0).</text>
</comment>
<comment type="subunit">
    <text evidence="1">F-type ATPases have 2 components, F(1) - the catalytic core - and F(0) - the membrane proton channel. F(1) has five subunits: alpha(3), beta(3), gamma(1), delta(1), epsilon(1). F(0) has three main subunits: a(1), b(2) and c(10-14). The alpha and beta chains form an alternating ring which encloses part of the gamma chain. F(1) is attached to F(0) by a central stalk formed by the gamma and epsilon chains, while a peripheral stalk is formed by the delta and b chains.</text>
</comment>
<comment type="subcellular location">
    <subcellularLocation>
        <location evidence="1">Cell inner membrane</location>
        <topology evidence="1">Single-pass membrane protein</topology>
    </subcellularLocation>
</comment>
<comment type="similarity">
    <text evidence="1">Belongs to the ATPase B chain family.</text>
</comment>
<accession>A9VYW7</accession>
<protein>
    <recommendedName>
        <fullName evidence="1">ATP synthase subunit b 1</fullName>
    </recommendedName>
    <alternativeName>
        <fullName evidence="1">ATP synthase F(0) sector subunit b 1</fullName>
    </alternativeName>
    <alternativeName>
        <fullName evidence="1">ATPase subunit I 1</fullName>
    </alternativeName>
    <alternativeName>
        <fullName evidence="1">F-type ATPase subunit b 1</fullName>
        <shortName evidence="1">F-ATPase subunit b 1</shortName>
    </alternativeName>
</protein>